<keyword id="KW-1185">Reference proteome</keyword>
<keyword id="KW-0831">Ubiquinone biosynthesis</keyword>
<evidence type="ECO:0000255" key="1">
    <source>
        <dbReference type="HAMAP-Rule" id="MF_02231"/>
    </source>
</evidence>
<evidence type="ECO:0000269" key="2">
    <source>
    </source>
</evidence>
<evidence type="ECO:0000303" key="3">
    <source>
    </source>
</evidence>
<evidence type="ECO:0000305" key="4"/>
<organism>
    <name type="scientific">Escherichia coli (strain K12)</name>
    <dbReference type="NCBI Taxonomy" id="83333"/>
    <lineage>
        <taxon>Bacteria</taxon>
        <taxon>Pseudomonadati</taxon>
        <taxon>Pseudomonadota</taxon>
        <taxon>Gammaproteobacteria</taxon>
        <taxon>Enterobacterales</taxon>
        <taxon>Enterobacteriaceae</taxon>
        <taxon>Escherichia</taxon>
    </lineage>
</organism>
<feature type="chain" id="PRO_0000169456" description="Ubiquinone biosynthesis accessory factor UbiT">
    <location>
        <begin position="1"/>
        <end position="174"/>
    </location>
</feature>
<feature type="domain" description="SCP2" evidence="1">
    <location>
        <begin position="45"/>
        <end position="133"/>
    </location>
</feature>
<dbReference type="EMBL" id="U18997">
    <property type="protein sequence ID" value="AAA57960.1"/>
    <property type="molecule type" value="Genomic_DNA"/>
</dbReference>
<dbReference type="EMBL" id="U00096">
    <property type="protein sequence ID" value="AAC76191.1"/>
    <property type="molecule type" value="Genomic_DNA"/>
</dbReference>
<dbReference type="EMBL" id="AP009048">
    <property type="protein sequence ID" value="BAE77203.1"/>
    <property type="molecule type" value="Genomic_DNA"/>
</dbReference>
<dbReference type="PIR" id="A65106">
    <property type="entry name" value="A65106"/>
</dbReference>
<dbReference type="RefSeq" id="NP_417626.1">
    <property type="nucleotide sequence ID" value="NC_000913.3"/>
</dbReference>
<dbReference type="RefSeq" id="WP_001295552.1">
    <property type="nucleotide sequence ID" value="NZ_SSUR01000002.1"/>
</dbReference>
<dbReference type="SMR" id="P64599"/>
<dbReference type="BioGRID" id="4259274">
    <property type="interactions" value="176"/>
</dbReference>
<dbReference type="BioGRID" id="851982">
    <property type="interactions" value="1"/>
</dbReference>
<dbReference type="FunCoup" id="P64599">
    <property type="interactions" value="66"/>
</dbReference>
<dbReference type="IntAct" id="P64599">
    <property type="interactions" value="6"/>
</dbReference>
<dbReference type="STRING" id="511145.b3157"/>
<dbReference type="PaxDb" id="511145-b3157"/>
<dbReference type="EnsemblBacteria" id="AAC76191">
    <property type="protein sequence ID" value="AAC76191"/>
    <property type="gene ID" value="b3157"/>
</dbReference>
<dbReference type="GeneID" id="947669"/>
<dbReference type="KEGG" id="ecj:JW3126"/>
<dbReference type="KEGG" id="eco:b3157"/>
<dbReference type="KEGG" id="ecoc:C3026_17195"/>
<dbReference type="PATRIC" id="fig|1411691.4.peg.3573"/>
<dbReference type="EchoBASE" id="EB2641"/>
<dbReference type="eggNOG" id="COG3154">
    <property type="taxonomic scope" value="Bacteria"/>
</dbReference>
<dbReference type="HOGENOM" id="CLU_111894_1_0_6"/>
<dbReference type="InParanoid" id="P64599"/>
<dbReference type="OMA" id="RDIGLQW"/>
<dbReference type="OrthoDB" id="5292463at2"/>
<dbReference type="PhylomeDB" id="P64599"/>
<dbReference type="BioCyc" id="EcoCyc:G7651-MONOMER"/>
<dbReference type="UniPathway" id="UPA00232"/>
<dbReference type="PRO" id="PR:P64599"/>
<dbReference type="Proteomes" id="UP000000625">
    <property type="component" value="Chromosome"/>
</dbReference>
<dbReference type="GO" id="GO:0005829">
    <property type="term" value="C:cytosol"/>
    <property type="evidence" value="ECO:0000314"/>
    <property type="project" value="EcoCyc"/>
</dbReference>
<dbReference type="GO" id="GO:0006744">
    <property type="term" value="P:ubiquinone biosynthetic process"/>
    <property type="evidence" value="ECO:0007669"/>
    <property type="project" value="UniProtKB-UniRule"/>
</dbReference>
<dbReference type="FunFam" id="3.30.1050.10:FF:000002">
    <property type="entry name" value="SCP2 domain-containing protein YhbT"/>
    <property type="match status" value="1"/>
</dbReference>
<dbReference type="Gene3D" id="3.30.1050.10">
    <property type="entry name" value="SCP2 sterol-binding domain"/>
    <property type="match status" value="1"/>
</dbReference>
<dbReference type="HAMAP" id="MF_02231">
    <property type="entry name" value="UbiT"/>
    <property type="match status" value="1"/>
</dbReference>
<dbReference type="InterPro" id="IPR003033">
    <property type="entry name" value="SCP2_sterol-bd_dom"/>
</dbReference>
<dbReference type="InterPro" id="IPR036527">
    <property type="entry name" value="SCP2_sterol-bd_dom_sf"/>
</dbReference>
<dbReference type="InterPro" id="IPR016830">
    <property type="entry name" value="UbiT"/>
</dbReference>
<dbReference type="PANTHER" id="PTHR10094:SF25">
    <property type="entry name" value="SCP2 STEROL-BINDING DOMAIN-CONTAINING PROTEIN 1"/>
    <property type="match status" value="1"/>
</dbReference>
<dbReference type="PANTHER" id="PTHR10094">
    <property type="entry name" value="STEROL CARRIER PROTEIN 2 SCP-2 FAMILY PROTEIN"/>
    <property type="match status" value="1"/>
</dbReference>
<dbReference type="Pfam" id="PF02036">
    <property type="entry name" value="SCP2"/>
    <property type="match status" value="1"/>
</dbReference>
<dbReference type="PIRSF" id="PIRSF025550">
    <property type="entry name" value="UCP025550_lpd_carrier"/>
    <property type="match status" value="1"/>
</dbReference>
<dbReference type="SUPFAM" id="SSF55718">
    <property type="entry name" value="SCP-like"/>
    <property type="match status" value="1"/>
</dbReference>
<proteinExistence type="inferred from homology"/>
<protein>
    <recommendedName>
        <fullName evidence="1 4">Ubiquinone biosynthesis accessory factor UbiT</fullName>
    </recommendedName>
</protein>
<sequence>MLDKLRSRIVHLGPSLLSVPVKLTPFALKRQVLEQVLSWQFRQALDDGELEFLEGRWLSIHVRDIDLQWFTSVVNGKLVVSQNAQADVSFSADASDLLMIAARKQDPDTLFFQRRLVIEGDTELGLYVKNLMDAIELEQMPKALRMMLLQLADFVEAGMKTAPETKQTSVGEPC</sequence>
<reference key="1">
    <citation type="journal article" date="1997" name="Science">
        <title>The complete genome sequence of Escherichia coli K-12.</title>
        <authorList>
            <person name="Blattner F.R."/>
            <person name="Plunkett G. III"/>
            <person name="Bloch C.A."/>
            <person name="Perna N.T."/>
            <person name="Burland V."/>
            <person name="Riley M."/>
            <person name="Collado-Vides J."/>
            <person name="Glasner J.D."/>
            <person name="Rode C.K."/>
            <person name="Mayhew G.F."/>
            <person name="Gregor J."/>
            <person name="Davis N.W."/>
            <person name="Kirkpatrick H.A."/>
            <person name="Goeden M.A."/>
            <person name="Rose D.J."/>
            <person name="Mau B."/>
            <person name="Shao Y."/>
        </authorList>
    </citation>
    <scope>NUCLEOTIDE SEQUENCE [LARGE SCALE GENOMIC DNA]</scope>
    <source>
        <strain>K12 / MG1655 / ATCC 47076</strain>
    </source>
</reference>
<reference key="2">
    <citation type="journal article" date="2006" name="Mol. Syst. Biol.">
        <title>Highly accurate genome sequences of Escherichia coli K-12 strains MG1655 and W3110.</title>
        <authorList>
            <person name="Hayashi K."/>
            <person name="Morooka N."/>
            <person name="Yamamoto Y."/>
            <person name="Fujita K."/>
            <person name="Isono K."/>
            <person name="Choi S."/>
            <person name="Ohtsubo E."/>
            <person name="Baba T."/>
            <person name="Wanner B.L."/>
            <person name="Mori H."/>
            <person name="Horiuchi T."/>
        </authorList>
    </citation>
    <scope>NUCLEOTIDE SEQUENCE [LARGE SCALE GENOMIC DNA]</scope>
    <source>
        <strain>K12 / W3110 / ATCC 27325 / DSM 5911</strain>
    </source>
</reference>
<reference key="3">
    <citation type="journal article" date="2019" name="MBio">
        <title>Ubiquinone biosynthesis over the entire O2 range: characterization of a conserved O2-independent pathway.</title>
        <authorList>
            <person name="Pelosi L."/>
            <person name="Vo C.D."/>
            <person name="Abby S.S."/>
            <person name="Loiseau L."/>
            <person name="Rascalou B."/>
            <person name="Hajj Chehade M."/>
            <person name="Faivre B."/>
            <person name="Gousse M."/>
            <person name="Chenal C."/>
            <person name="Touati N."/>
            <person name="Binet L."/>
            <person name="Cornu D."/>
            <person name="Fyfe C.D."/>
            <person name="Fontecave M."/>
            <person name="Barras F."/>
            <person name="Lombard M."/>
            <person name="Pierrel F."/>
        </authorList>
    </citation>
    <scope>FUNCTION</scope>
    <scope>PATHWAY</scope>
    <scope>DISRUPTION PHENOTYPE</scope>
    <source>
        <strain>K12 / MG1655 / ATCC 47076</strain>
    </source>
</reference>
<comment type="function">
    <text evidence="1 2">Required for O(2)-independent ubiquinone (coenzyme Q) biosynthesis. Likely functions as an accessory factor.</text>
</comment>
<comment type="pathway">
    <text evidence="1 2">Cofactor biosynthesis; ubiquinone biosynthesis.</text>
</comment>
<comment type="disruption phenotype">
    <text evidence="2">Deletion mutant is unable to synthesize ubiquinone under strict anaerobic conditions. Mutant shows normal levels of ubiquinone after aerobic growth.</text>
</comment>
<comment type="similarity">
    <text evidence="1 4">Belongs to the UbiT family.</text>
</comment>
<gene>
    <name evidence="1 3" type="primary">ubiT</name>
    <name type="synonym">yhbT</name>
    <name type="ordered locus">b3157</name>
    <name type="ordered locus">JW3126</name>
</gene>
<accession>P64599</accession>
<accession>P45474</accession>
<accession>Q2M953</accession>
<name>UBIT_ECOLI</name>